<keyword id="KW-0067">ATP-binding</keyword>
<keyword id="KW-0418">Kinase</keyword>
<keyword id="KW-0545">Nucleotide biosynthesis</keyword>
<keyword id="KW-0547">Nucleotide-binding</keyword>
<keyword id="KW-0808">Transferase</keyword>
<dbReference type="EC" id="2.7.4.9" evidence="1"/>
<dbReference type="EMBL" id="CR848038">
    <property type="protein sequence ID" value="CAH63947.1"/>
    <property type="molecule type" value="Genomic_DNA"/>
</dbReference>
<dbReference type="RefSeq" id="WP_011097118.1">
    <property type="nucleotide sequence ID" value="NC_004552.2"/>
</dbReference>
<dbReference type="SMR" id="Q5L5Y4"/>
<dbReference type="KEGG" id="cab:CAB495"/>
<dbReference type="eggNOG" id="COG0125">
    <property type="taxonomic scope" value="Bacteria"/>
</dbReference>
<dbReference type="HOGENOM" id="CLU_049131_0_2_0"/>
<dbReference type="OrthoDB" id="9774907at2"/>
<dbReference type="Proteomes" id="UP000001012">
    <property type="component" value="Chromosome"/>
</dbReference>
<dbReference type="GO" id="GO:0005829">
    <property type="term" value="C:cytosol"/>
    <property type="evidence" value="ECO:0007669"/>
    <property type="project" value="TreeGrafter"/>
</dbReference>
<dbReference type="GO" id="GO:0005524">
    <property type="term" value="F:ATP binding"/>
    <property type="evidence" value="ECO:0007669"/>
    <property type="project" value="UniProtKB-UniRule"/>
</dbReference>
<dbReference type="GO" id="GO:0004798">
    <property type="term" value="F:dTMP kinase activity"/>
    <property type="evidence" value="ECO:0007669"/>
    <property type="project" value="UniProtKB-UniRule"/>
</dbReference>
<dbReference type="GO" id="GO:0006233">
    <property type="term" value="P:dTDP biosynthetic process"/>
    <property type="evidence" value="ECO:0007669"/>
    <property type="project" value="InterPro"/>
</dbReference>
<dbReference type="GO" id="GO:0006235">
    <property type="term" value="P:dTTP biosynthetic process"/>
    <property type="evidence" value="ECO:0007669"/>
    <property type="project" value="UniProtKB-UniRule"/>
</dbReference>
<dbReference type="GO" id="GO:0006227">
    <property type="term" value="P:dUDP biosynthetic process"/>
    <property type="evidence" value="ECO:0007669"/>
    <property type="project" value="TreeGrafter"/>
</dbReference>
<dbReference type="CDD" id="cd01672">
    <property type="entry name" value="TMPK"/>
    <property type="match status" value="1"/>
</dbReference>
<dbReference type="FunFam" id="3.40.50.300:FF:000225">
    <property type="entry name" value="Thymidylate kinase"/>
    <property type="match status" value="1"/>
</dbReference>
<dbReference type="Gene3D" id="3.40.50.300">
    <property type="entry name" value="P-loop containing nucleotide triphosphate hydrolases"/>
    <property type="match status" value="1"/>
</dbReference>
<dbReference type="HAMAP" id="MF_00165">
    <property type="entry name" value="Thymidylate_kinase"/>
    <property type="match status" value="1"/>
</dbReference>
<dbReference type="InterPro" id="IPR027417">
    <property type="entry name" value="P-loop_NTPase"/>
</dbReference>
<dbReference type="InterPro" id="IPR039430">
    <property type="entry name" value="Thymidylate_kin-like_dom"/>
</dbReference>
<dbReference type="InterPro" id="IPR018095">
    <property type="entry name" value="Thymidylate_kin_CS"/>
</dbReference>
<dbReference type="InterPro" id="IPR018094">
    <property type="entry name" value="Thymidylate_kinase"/>
</dbReference>
<dbReference type="NCBIfam" id="TIGR00041">
    <property type="entry name" value="DTMP_kinase"/>
    <property type="match status" value="1"/>
</dbReference>
<dbReference type="PANTHER" id="PTHR10344">
    <property type="entry name" value="THYMIDYLATE KINASE"/>
    <property type="match status" value="1"/>
</dbReference>
<dbReference type="PANTHER" id="PTHR10344:SF4">
    <property type="entry name" value="UMP-CMP KINASE 2, MITOCHONDRIAL"/>
    <property type="match status" value="1"/>
</dbReference>
<dbReference type="Pfam" id="PF02223">
    <property type="entry name" value="Thymidylate_kin"/>
    <property type="match status" value="1"/>
</dbReference>
<dbReference type="SUPFAM" id="SSF52540">
    <property type="entry name" value="P-loop containing nucleoside triphosphate hydrolases"/>
    <property type="match status" value="1"/>
</dbReference>
<dbReference type="PROSITE" id="PS01331">
    <property type="entry name" value="THYMIDYLATE_KINASE"/>
    <property type="match status" value="1"/>
</dbReference>
<comment type="function">
    <text evidence="1">Phosphorylation of dTMP to form dTDP in both de novo and salvage pathways of dTTP synthesis.</text>
</comment>
<comment type="catalytic activity">
    <reaction evidence="1">
        <text>dTMP + ATP = dTDP + ADP</text>
        <dbReference type="Rhea" id="RHEA:13517"/>
        <dbReference type="ChEBI" id="CHEBI:30616"/>
        <dbReference type="ChEBI" id="CHEBI:58369"/>
        <dbReference type="ChEBI" id="CHEBI:63528"/>
        <dbReference type="ChEBI" id="CHEBI:456216"/>
        <dbReference type="EC" id="2.7.4.9"/>
    </reaction>
</comment>
<comment type="similarity">
    <text evidence="1">Belongs to the thymidylate kinase family.</text>
</comment>
<evidence type="ECO:0000255" key="1">
    <source>
        <dbReference type="HAMAP-Rule" id="MF_00165"/>
    </source>
</evidence>
<sequence length="211" mass="23491">MFIVIEGCEGSGKSSLTQLLKDKLMAEGKAVVATREPGGSSLGERVRDWILDPSTTELSPYTELFLFLAARAQHITEKILPALELGKIVVCDRFHDSTIVYQGIVGGLGKEYVTNLCHSVVGQKKILPNLTCLLDIPADEGLKRKQQQKSFDKFENQSLAYHTKIREGFLSLAESRLDSYLVLDARQPIEESLNKVMTAYTELALCKSKER</sequence>
<name>KTHY_CHLAB</name>
<feature type="chain" id="PRO_0000155258" description="Thymidylate kinase">
    <location>
        <begin position="1"/>
        <end position="211"/>
    </location>
</feature>
<feature type="binding site" evidence="1">
    <location>
        <begin position="7"/>
        <end position="14"/>
    </location>
    <ligand>
        <name>ATP</name>
        <dbReference type="ChEBI" id="CHEBI:30616"/>
    </ligand>
</feature>
<reference key="1">
    <citation type="journal article" date="2005" name="Genome Res.">
        <title>The Chlamydophila abortus genome sequence reveals an array of variable proteins that contribute to interspecies variation.</title>
        <authorList>
            <person name="Thomson N.R."/>
            <person name="Yeats C."/>
            <person name="Bell K."/>
            <person name="Holden M.T.G."/>
            <person name="Bentley S.D."/>
            <person name="Livingstone M."/>
            <person name="Cerdeno-Tarraga A.-M."/>
            <person name="Harris B."/>
            <person name="Doggett J."/>
            <person name="Ormond D."/>
            <person name="Mungall K."/>
            <person name="Clarke K."/>
            <person name="Feltwell T."/>
            <person name="Hance Z."/>
            <person name="Sanders M."/>
            <person name="Quail M.A."/>
            <person name="Price C."/>
            <person name="Barrell B.G."/>
            <person name="Parkhill J."/>
            <person name="Longbottom D."/>
        </authorList>
    </citation>
    <scope>NUCLEOTIDE SEQUENCE [LARGE SCALE GENOMIC DNA]</scope>
    <source>
        <strain>DSM 27085 / S26/3</strain>
    </source>
</reference>
<proteinExistence type="inferred from homology"/>
<accession>Q5L5Y4</accession>
<gene>
    <name evidence="1" type="primary">tmk</name>
    <name type="ordered locus">CAB495</name>
</gene>
<organism>
    <name type="scientific">Chlamydia abortus (strain DSM 27085 / S26/3)</name>
    <name type="common">Chlamydophila abortus</name>
    <dbReference type="NCBI Taxonomy" id="218497"/>
    <lineage>
        <taxon>Bacteria</taxon>
        <taxon>Pseudomonadati</taxon>
        <taxon>Chlamydiota</taxon>
        <taxon>Chlamydiia</taxon>
        <taxon>Chlamydiales</taxon>
        <taxon>Chlamydiaceae</taxon>
        <taxon>Chlamydia/Chlamydophila group</taxon>
        <taxon>Chlamydia</taxon>
    </lineage>
</organism>
<protein>
    <recommendedName>
        <fullName evidence="1">Thymidylate kinase</fullName>
        <ecNumber evidence="1">2.7.4.9</ecNumber>
    </recommendedName>
    <alternativeName>
        <fullName evidence="1">dTMP kinase</fullName>
    </alternativeName>
</protein>